<organism>
    <name type="scientific">Escherichia coli (strain SMS-3-5 / SECEC)</name>
    <dbReference type="NCBI Taxonomy" id="439855"/>
    <lineage>
        <taxon>Bacteria</taxon>
        <taxon>Pseudomonadati</taxon>
        <taxon>Pseudomonadota</taxon>
        <taxon>Gammaproteobacteria</taxon>
        <taxon>Enterobacterales</taxon>
        <taxon>Enterobacteriaceae</taxon>
        <taxon>Escherichia</taxon>
    </lineage>
</organism>
<comment type="function">
    <text evidence="1">Produces ATP from ADP in the presence of a proton gradient across the membrane. The catalytic sites are hosted primarily by the beta subunits.</text>
</comment>
<comment type="catalytic activity">
    <reaction evidence="1">
        <text>ATP + H2O + 4 H(+)(in) = ADP + phosphate + 5 H(+)(out)</text>
        <dbReference type="Rhea" id="RHEA:57720"/>
        <dbReference type="ChEBI" id="CHEBI:15377"/>
        <dbReference type="ChEBI" id="CHEBI:15378"/>
        <dbReference type="ChEBI" id="CHEBI:30616"/>
        <dbReference type="ChEBI" id="CHEBI:43474"/>
        <dbReference type="ChEBI" id="CHEBI:456216"/>
        <dbReference type="EC" id="7.1.2.2"/>
    </reaction>
</comment>
<comment type="subunit">
    <text evidence="1">F-type ATPases have 2 components, CF(1) - the catalytic core - and CF(0) - the membrane proton channel. CF(1) has five subunits: alpha(3), beta(3), gamma(1), delta(1), epsilon(1). CF(0) has three main subunits: a(1), b(2) and c(9-12). The alpha and beta chains form an alternating ring which encloses part of the gamma chain. CF(1) is attached to CF(0) by a central stalk formed by the gamma and epsilon chains, while a peripheral stalk is formed by the delta and b chains.</text>
</comment>
<comment type="subcellular location">
    <subcellularLocation>
        <location evidence="1">Cell inner membrane</location>
        <topology evidence="1">Peripheral membrane protein</topology>
    </subcellularLocation>
</comment>
<comment type="similarity">
    <text evidence="1">Belongs to the ATPase alpha/beta chains family.</text>
</comment>
<gene>
    <name evidence="1" type="primary">atpD</name>
    <name type="ordered locus">EcSMS35_4100</name>
</gene>
<dbReference type="EC" id="7.1.2.2" evidence="1"/>
<dbReference type="EMBL" id="CP000970">
    <property type="protein sequence ID" value="ACB17085.1"/>
    <property type="molecule type" value="Genomic_DNA"/>
</dbReference>
<dbReference type="RefSeq" id="WP_000190506.1">
    <property type="nucleotide sequence ID" value="NC_010498.1"/>
</dbReference>
<dbReference type="SMR" id="B1LL59"/>
<dbReference type="GeneID" id="93778235"/>
<dbReference type="KEGG" id="ecm:EcSMS35_4100"/>
<dbReference type="HOGENOM" id="CLU_022398_0_2_6"/>
<dbReference type="Proteomes" id="UP000007011">
    <property type="component" value="Chromosome"/>
</dbReference>
<dbReference type="GO" id="GO:0005886">
    <property type="term" value="C:plasma membrane"/>
    <property type="evidence" value="ECO:0007669"/>
    <property type="project" value="UniProtKB-SubCell"/>
</dbReference>
<dbReference type="GO" id="GO:0045259">
    <property type="term" value="C:proton-transporting ATP synthase complex"/>
    <property type="evidence" value="ECO:0007669"/>
    <property type="project" value="UniProtKB-KW"/>
</dbReference>
<dbReference type="GO" id="GO:0005524">
    <property type="term" value="F:ATP binding"/>
    <property type="evidence" value="ECO:0007669"/>
    <property type="project" value="UniProtKB-UniRule"/>
</dbReference>
<dbReference type="GO" id="GO:0016887">
    <property type="term" value="F:ATP hydrolysis activity"/>
    <property type="evidence" value="ECO:0007669"/>
    <property type="project" value="InterPro"/>
</dbReference>
<dbReference type="GO" id="GO:0046933">
    <property type="term" value="F:proton-transporting ATP synthase activity, rotational mechanism"/>
    <property type="evidence" value="ECO:0007669"/>
    <property type="project" value="UniProtKB-UniRule"/>
</dbReference>
<dbReference type="CDD" id="cd18110">
    <property type="entry name" value="ATP-synt_F1_beta_C"/>
    <property type="match status" value="1"/>
</dbReference>
<dbReference type="CDD" id="cd18115">
    <property type="entry name" value="ATP-synt_F1_beta_N"/>
    <property type="match status" value="1"/>
</dbReference>
<dbReference type="CDD" id="cd01133">
    <property type="entry name" value="F1-ATPase_beta_CD"/>
    <property type="match status" value="1"/>
</dbReference>
<dbReference type="FunFam" id="1.10.1140.10:FF:000001">
    <property type="entry name" value="ATP synthase subunit beta"/>
    <property type="match status" value="1"/>
</dbReference>
<dbReference type="FunFam" id="2.40.10.170:FF:000003">
    <property type="entry name" value="ATP synthase subunit beta"/>
    <property type="match status" value="1"/>
</dbReference>
<dbReference type="FunFam" id="3.40.50.300:FF:000004">
    <property type="entry name" value="ATP synthase subunit beta"/>
    <property type="match status" value="1"/>
</dbReference>
<dbReference type="Gene3D" id="2.40.10.170">
    <property type="match status" value="1"/>
</dbReference>
<dbReference type="Gene3D" id="1.10.1140.10">
    <property type="entry name" value="Bovine Mitochondrial F1-atpase, Atp Synthase Beta Chain, Chain D, domain 3"/>
    <property type="match status" value="1"/>
</dbReference>
<dbReference type="Gene3D" id="3.40.50.300">
    <property type="entry name" value="P-loop containing nucleotide triphosphate hydrolases"/>
    <property type="match status" value="1"/>
</dbReference>
<dbReference type="HAMAP" id="MF_01347">
    <property type="entry name" value="ATP_synth_beta_bact"/>
    <property type="match status" value="1"/>
</dbReference>
<dbReference type="InterPro" id="IPR003593">
    <property type="entry name" value="AAA+_ATPase"/>
</dbReference>
<dbReference type="InterPro" id="IPR055190">
    <property type="entry name" value="ATP-synt_VA_C"/>
</dbReference>
<dbReference type="InterPro" id="IPR005722">
    <property type="entry name" value="ATP_synth_F1_bsu"/>
</dbReference>
<dbReference type="InterPro" id="IPR020003">
    <property type="entry name" value="ATPase_a/bsu_AS"/>
</dbReference>
<dbReference type="InterPro" id="IPR050053">
    <property type="entry name" value="ATPase_alpha/beta_chains"/>
</dbReference>
<dbReference type="InterPro" id="IPR004100">
    <property type="entry name" value="ATPase_F1/V1/A1_a/bsu_N"/>
</dbReference>
<dbReference type="InterPro" id="IPR036121">
    <property type="entry name" value="ATPase_F1/V1/A1_a/bsu_N_sf"/>
</dbReference>
<dbReference type="InterPro" id="IPR000194">
    <property type="entry name" value="ATPase_F1/V1/A1_a/bsu_nucl-bd"/>
</dbReference>
<dbReference type="InterPro" id="IPR024034">
    <property type="entry name" value="ATPase_F1/V1_b/a_C"/>
</dbReference>
<dbReference type="InterPro" id="IPR027417">
    <property type="entry name" value="P-loop_NTPase"/>
</dbReference>
<dbReference type="NCBIfam" id="TIGR01039">
    <property type="entry name" value="atpD"/>
    <property type="match status" value="1"/>
</dbReference>
<dbReference type="PANTHER" id="PTHR15184">
    <property type="entry name" value="ATP SYNTHASE"/>
    <property type="match status" value="1"/>
</dbReference>
<dbReference type="PANTHER" id="PTHR15184:SF71">
    <property type="entry name" value="ATP SYNTHASE SUBUNIT BETA, MITOCHONDRIAL"/>
    <property type="match status" value="1"/>
</dbReference>
<dbReference type="Pfam" id="PF00006">
    <property type="entry name" value="ATP-synt_ab"/>
    <property type="match status" value="1"/>
</dbReference>
<dbReference type="Pfam" id="PF02874">
    <property type="entry name" value="ATP-synt_ab_N"/>
    <property type="match status" value="1"/>
</dbReference>
<dbReference type="Pfam" id="PF22919">
    <property type="entry name" value="ATP-synt_VA_C"/>
    <property type="match status" value="1"/>
</dbReference>
<dbReference type="SMART" id="SM00382">
    <property type="entry name" value="AAA"/>
    <property type="match status" value="1"/>
</dbReference>
<dbReference type="SUPFAM" id="SSF47917">
    <property type="entry name" value="C-terminal domain of alpha and beta subunits of F1 ATP synthase"/>
    <property type="match status" value="1"/>
</dbReference>
<dbReference type="SUPFAM" id="SSF50615">
    <property type="entry name" value="N-terminal domain of alpha and beta subunits of F1 ATP synthase"/>
    <property type="match status" value="1"/>
</dbReference>
<dbReference type="SUPFAM" id="SSF52540">
    <property type="entry name" value="P-loop containing nucleoside triphosphate hydrolases"/>
    <property type="match status" value="1"/>
</dbReference>
<dbReference type="PROSITE" id="PS00152">
    <property type="entry name" value="ATPASE_ALPHA_BETA"/>
    <property type="match status" value="1"/>
</dbReference>
<evidence type="ECO:0000255" key="1">
    <source>
        <dbReference type="HAMAP-Rule" id="MF_01347"/>
    </source>
</evidence>
<name>ATPB_ECOSM</name>
<accession>B1LL59</accession>
<keyword id="KW-0066">ATP synthesis</keyword>
<keyword id="KW-0067">ATP-binding</keyword>
<keyword id="KW-0997">Cell inner membrane</keyword>
<keyword id="KW-1003">Cell membrane</keyword>
<keyword id="KW-0139">CF(1)</keyword>
<keyword id="KW-0375">Hydrogen ion transport</keyword>
<keyword id="KW-0406">Ion transport</keyword>
<keyword id="KW-0472">Membrane</keyword>
<keyword id="KW-0547">Nucleotide-binding</keyword>
<keyword id="KW-1278">Translocase</keyword>
<keyword id="KW-0813">Transport</keyword>
<protein>
    <recommendedName>
        <fullName evidence="1">ATP synthase subunit beta</fullName>
        <ecNumber evidence="1">7.1.2.2</ecNumber>
    </recommendedName>
    <alternativeName>
        <fullName evidence="1">ATP synthase F1 sector subunit beta</fullName>
    </alternativeName>
    <alternativeName>
        <fullName evidence="1">F-ATPase subunit beta</fullName>
    </alternativeName>
</protein>
<proteinExistence type="inferred from homology"/>
<reference key="1">
    <citation type="journal article" date="2008" name="J. Bacteriol.">
        <title>Insights into the environmental resistance gene pool from the genome sequence of the multidrug-resistant environmental isolate Escherichia coli SMS-3-5.</title>
        <authorList>
            <person name="Fricke W.F."/>
            <person name="Wright M.S."/>
            <person name="Lindell A.H."/>
            <person name="Harkins D.M."/>
            <person name="Baker-Austin C."/>
            <person name="Ravel J."/>
            <person name="Stepanauskas R."/>
        </authorList>
    </citation>
    <scope>NUCLEOTIDE SEQUENCE [LARGE SCALE GENOMIC DNA]</scope>
    <source>
        <strain>SMS-3-5 / SECEC</strain>
    </source>
</reference>
<sequence length="460" mass="50325">MATGKIVQVIGAVVDVEFPQDAVPRVYDALEVQNGNERLVLEVQQQLGGGIVRTIAMGSSDGLRRGLDVKDLEHPIEVPVGKATLGRIMNVLGEPVDMKGEIGEEERWAIHRAAPSYEELSNSQELLETGIKVIDLMCPFAKGGKVGLFGGAGVGKTVNMMELIRNIAIEHSGYSVFAGVGERTREGNDFYHEMTDSNVIDKVSLVYGQMNEPPGNRLRVALTGLTMAEKFRDEGRDVLLFVDNIYRYTLAGTEVSALLGRMPSAVGYQPTLAEEMGVLQERITSTKTGSITSVQAVYVPADDLTDPSPATTFAHLDATVVLSRQIASLGIYPAVDPLDSTSRQLDPLVVGQEHYDTARGVQSILQRYQELKDIIAILGMDELSEEDKLVVARARKIQRFLSQPFFVAEVFTGSPGKYVSLKDTIRGFKGIMEGEYDHLPEQAFYMVGSIEEAVEKAKKL</sequence>
<feature type="chain" id="PRO_1000143506" description="ATP synthase subunit beta">
    <location>
        <begin position="1"/>
        <end position="460"/>
    </location>
</feature>
<feature type="binding site" evidence="1">
    <location>
        <begin position="150"/>
        <end position="157"/>
    </location>
    <ligand>
        <name>ATP</name>
        <dbReference type="ChEBI" id="CHEBI:30616"/>
    </ligand>
</feature>